<comment type="function">
    <text evidence="4">Catalyzes the high-affinity uptake of extracellular proline. Important for the use of proline as a sole carbon and energy source or a sole nitrogen source.</text>
</comment>
<comment type="catalytic activity">
    <reaction evidence="7">
        <text>L-proline(in) + Na(+)(in) = L-proline(out) + Na(+)(out)</text>
        <dbReference type="Rhea" id="RHEA:28967"/>
        <dbReference type="ChEBI" id="CHEBI:29101"/>
        <dbReference type="ChEBI" id="CHEBI:60039"/>
    </reaction>
</comment>
<comment type="biophysicochemical properties">
    <kinetics>
        <KM evidence="4">8 uM for proline</KM>
        <Vmax evidence="4">29.0 nmol/min/mg enzyme</Vmax>
        <Vmax evidence="4">28.0 nmol/min/mg enzyme (in the presence of 0.4 M NaCl)</Vmax>
        <Vmax evidence="4">158.0 nmol/min/mg enzyme (in the presence of 1 mM proline)</Vmax>
    </kinetics>
</comment>
<comment type="subcellular location">
    <subcellularLocation>
        <location evidence="6">Cell membrane</location>
        <topology evidence="1">Multi-pass membrane protein</topology>
    </subcellularLocation>
</comment>
<comment type="induction">
    <text evidence="2 3 4">The expression of the putBCP operon is induced in a PutR-dependent fashion by very low concentrations of L-proline in the growth medium. CodY represses the operon by displacing PutR from DNA.</text>
</comment>
<comment type="disruption phenotype">
    <text evidence="4">Deletion of the putBCP operon abolishes L-proline utilization.</text>
</comment>
<comment type="similarity">
    <text evidence="6">Belongs to the sodium:solute symporter (SSF) (TC 2.A.21) family.</text>
</comment>
<comment type="sequence caution" evidence="6">
    <conflict type="erroneous initiation">
        <sequence resource="EMBL-CDS" id="BAA08956"/>
    </conflict>
    <text>Truncated N-terminus.</text>
</comment>
<dbReference type="EMBL" id="D50453">
    <property type="protein sequence ID" value="BAA08956.1"/>
    <property type="status" value="ALT_INIT"/>
    <property type="molecule type" value="Genomic_DNA"/>
</dbReference>
<dbReference type="EMBL" id="AL009126">
    <property type="protein sequence ID" value="CAB12116.2"/>
    <property type="molecule type" value="Genomic_DNA"/>
</dbReference>
<dbReference type="PIR" id="B69759">
    <property type="entry name" value="B69759"/>
</dbReference>
<dbReference type="RefSeq" id="NP_388204.2">
    <property type="nucleotide sequence ID" value="NC_000964.3"/>
</dbReference>
<dbReference type="RefSeq" id="WP_010886399.1">
    <property type="nucleotide sequence ID" value="NZ_OZ025638.1"/>
</dbReference>
<dbReference type="SMR" id="P94392"/>
<dbReference type="FunCoup" id="P94392">
    <property type="interactions" value="358"/>
</dbReference>
<dbReference type="STRING" id="224308.BSU03220"/>
<dbReference type="PaxDb" id="224308-BSU03220"/>
<dbReference type="EnsemblBacteria" id="CAB12116">
    <property type="protein sequence ID" value="CAB12116"/>
    <property type="gene ID" value="BSU_03220"/>
</dbReference>
<dbReference type="GeneID" id="938330"/>
<dbReference type="KEGG" id="bsu:BSU03220"/>
<dbReference type="PATRIC" id="fig|224308.43.peg.330"/>
<dbReference type="eggNOG" id="COG0591">
    <property type="taxonomic scope" value="Bacteria"/>
</dbReference>
<dbReference type="InParanoid" id="P94392"/>
<dbReference type="OrthoDB" id="9810181at2"/>
<dbReference type="PhylomeDB" id="P94392"/>
<dbReference type="BioCyc" id="BSUB:BSU03220-MONOMER"/>
<dbReference type="SABIO-RK" id="P94392"/>
<dbReference type="Proteomes" id="UP000001570">
    <property type="component" value="Chromosome"/>
</dbReference>
<dbReference type="GO" id="GO:0005886">
    <property type="term" value="C:plasma membrane"/>
    <property type="evidence" value="ECO:0000318"/>
    <property type="project" value="GO_Central"/>
</dbReference>
<dbReference type="GO" id="GO:0015193">
    <property type="term" value="F:L-proline transmembrane transporter activity"/>
    <property type="evidence" value="ECO:0000315"/>
    <property type="project" value="CACAO"/>
</dbReference>
<dbReference type="GO" id="GO:0005298">
    <property type="term" value="F:proline:sodium symporter activity"/>
    <property type="evidence" value="ECO:0000318"/>
    <property type="project" value="GO_Central"/>
</dbReference>
<dbReference type="GO" id="GO:0031402">
    <property type="term" value="F:sodium ion binding"/>
    <property type="evidence" value="ECO:0007669"/>
    <property type="project" value="InterPro"/>
</dbReference>
<dbReference type="GO" id="GO:0015824">
    <property type="term" value="P:proline transport"/>
    <property type="evidence" value="ECO:0000318"/>
    <property type="project" value="GO_Central"/>
</dbReference>
<dbReference type="GO" id="GO:0055085">
    <property type="term" value="P:transmembrane transport"/>
    <property type="evidence" value="ECO:0000318"/>
    <property type="project" value="GO_Central"/>
</dbReference>
<dbReference type="CDD" id="cd11475">
    <property type="entry name" value="SLC5sbd_PutP"/>
    <property type="match status" value="1"/>
</dbReference>
<dbReference type="FunFam" id="1.20.1730.10:FF:000002">
    <property type="entry name" value="Sodium/proline symporter"/>
    <property type="match status" value="1"/>
</dbReference>
<dbReference type="Gene3D" id="1.20.1730.10">
    <property type="entry name" value="Sodium/glucose cotransporter"/>
    <property type="match status" value="1"/>
</dbReference>
<dbReference type="InterPro" id="IPR038377">
    <property type="entry name" value="Na/Glc_symporter_sf"/>
</dbReference>
<dbReference type="InterPro" id="IPR011851">
    <property type="entry name" value="Na/Pro_symporter"/>
</dbReference>
<dbReference type="InterPro" id="IPR001734">
    <property type="entry name" value="Na/solute_symporter"/>
</dbReference>
<dbReference type="InterPro" id="IPR018212">
    <property type="entry name" value="Na/solute_symporter_CS"/>
</dbReference>
<dbReference type="InterPro" id="IPR050277">
    <property type="entry name" value="Sodium:Solute_Symporter"/>
</dbReference>
<dbReference type="NCBIfam" id="TIGR02121">
    <property type="entry name" value="Na_Pro_sym"/>
    <property type="match status" value="1"/>
</dbReference>
<dbReference type="NCBIfam" id="TIGR00813">
    <property type="entry name" value="sss"/>
    <property type="match status" value="1"/>
</dbReference>
<dbReference type="PANTHER" id="PTHR48086">
    <property type="entry name" value="SODIUM/PROLINE SYMPORTER-RELATED"/>
    <property type="match status" value="1"/>
</dbReference>
<dbReference type="PANTHER" id="PTHR48086:SF3">
    <property type="entry name" value="SODIUM_PROLINE SYMPORTER"/>
    <property type="match status" value="1"/>
</dbReference>
<dbReference type="Pfam" id="PF00474">
    <property type="entry name" value="SSF"/>
    <property type="match status" value="1"/>
</dbReference>
<dbReference type="PROSITE" id="PS00456">
    <property type="entry name" value="NA_SOLUT_SYMP_1"/>
    <property type="match status" value="1"/>
</dbReference>
<dbReference type="PROSITE" id="PS00457">
    <property type="entry name" value="NA_SOLUT_SYMP_2"/>
    <property type="match status" value="1"/>
</dbReference>
<dbReference type="PROSITE" id="PS50283">
    <property type="entry name" value="NA_SOLUT_SYMP_3"/>
    <property type="match status" value="1"/>
</dbReference>
<protein>
    <recommendedName>
        <fullName evidence="5">High-affinity proline transporter PutP</fullName>
    </recommendedName>
</protein>
<accession>P94392</accession>
<accession>Q797Q4</accession>
<organism>
    <name type="scientific">Bacillus subtilis (strain 168)</name>
    <dbReference type="NCBI Taxonomy" id="224308"/>
    <lineage>
        <taxon>Bacteria</taxon>
        <taxon>Bacillati</taxon>
        <taxon>Bacillota</taxon>
        <taxon>Bacilli</taxon>
        <taxon>Bacillales</taxon>
        <taxon>Bacillaceae</taxon>
        <taxon>Bacillus</taxon>
    </lineage>
</organism>
<sequence length="473" mass="51144">MLLIGYFAYKRTSNLTDYMLGGRSLGPAVTALSAGAADMSGWLLMGLPGAMFSTGLSGAWIVIGLCLGAWANWLYVAPRLRTYTEKAGNSITIPGFLENRFGDQTKLLRLFSGIVILVFFTFYVSSGMVSGGVLFNSILGMDYHTGLWIVTGVVVAYTLFGGFLAVSWTDFVQGIIMFAALILVPIVTFFHTGGAGDTVAEIRSVDPDMFNIFKGTSVLGIISLFAWGLGYFGQPHIIVRFMAITSVKEIKRARRIGMGWMILSAVGAVLTGLGGIAYYHQRGMTLKDPETIFIQLGNILFHPIITGFLISAILAAIMSTISSQLLVTSSSLVEDLYKSMFRRSASDKELVFLGRLAVLAVSIVALVLAWEKNNTILGLVSYAWAGFGASFGPVVLLSLFWKRMTKWGALAGMIVGAATVIIWANAGLSDFLYEMIPGFAASLLSVFFVSILTQAPSQAVTDQFNDYQDTMSQ</sequence>
<reference key="1">
    <citation type="journal article" date="1996" name="Microbiology">
        <title>The 25 degrees-36 degrees region of the Bacillus subtilis chromosome: determination of the sequence of a 146 kb segment and identification of 113 genes.</title>
        <authorList>
            <person name="Yamane K."/>
            <person name="Kumano M."/>
            <person name="Kurita K."/>
        </authorList>
    </citation>
    <scope>NUCLEOTIDE SEQUENCE [GENOMIC DNA]</scope>
    <source>
        <strain>168</strain>
    </source>
</reference>
<reference key="2">
    <citation type="journal article" date="1997" name="Nature">
        <title>The complete genome sequence of the Gram-positive bacterium Bacillus subtilis.</title>
        <authorList>
            <person name="Kunst F."/>
            <person name="Ogasawara N."/>
            <person name="Moszer I."/>
            <person name="Albertini A.M."/>
            <person name="Alloni G."/>
            <person name="Azevedo V."/>
            <person name="Bertero M.G."/>
            <person name="Bessieres P."/>
            <person name="Bolotin A."/>
            <person name="Borchert S."/>
            <person name="Borriss R."/>
            <person name="Boursier L."/>
            <person name="Brans A."/>
            <person name="Braun M."/>
            <person name="Brignell S.C."/>
            <person name="Bron S."/>
            <person name="Brouillet S."/>
            <person name="Bruschi C.V."/>
            <person name="Caldwell B."/>
            <person name="Capuano V."/>
            <person name="Carter N.M."/>
            <person name="Choi S.-K."/>
            <person name="Codani J.-J."/>
            <person name="Connerton I.F."/>
            <person name="Cummings N.J."/>
            <person name="Daniel R.A."/>
            <person name="Denizot F."/>
            <person name="Devine K.M."/>
            <person name="Duesterhoeft A."/>
            <person name="Ehrlich S.D."/>
            <person name="Emmerson P.T."/>
            <person name="Entian K.-D."/>
            <person name="Errington J."/>
            <person name="Fabret C."/>
            <person name="Ferrari E."/>
            <person name="Foulger D."/>
            <person name="Fritz C."/>
            <person name="Fujita M."/>
            <person name="Fujita Y."/>
            <person name="Fuma S."/>
            <person name="Galizzi A."/>
            <person name="Galleron N."/>
            <person name="Ghim S.-Y."/>
            <person name="Glaser P."/>
            <person name="Goffeau A."/>
            <person name="Golightly E.J."/>
            <person name="Grandi G."/>
            <person name="Guiseppi G."/>
            <person name="Guy B.J."/>
            <person name="Haga K."/>
            <person name="Haiech J."/>
            <person name="Harwood C.R."/>
            <person name="Henaut A."/>
            <person name="Hilbert H."/>
            <person name="Holsappel S."/>
            <person name="Hosono S."/>
            <person name="Hullo M.-F."/>
            <person name="Itaya M."/>
            <person name="Jones L.-M."/>
            <person name="Joris B."/>
            <person name="Karamata D."/>
            <person name="Kasahara Y."/>
            <person name="Klaerr-Blanchard M."/>
            <person name="Klein C."/>
            <person name="Kobayashi Y."/>
            <person name="Koetter P."/>
            <person name="Koningstein G."/>
            <person name="Krogh S."/>
            <person name="Kumano M."/>
            <person name="Kurita K."/>
            <person name="Lapidus A."/>
            <person name="Lardinois S."/>
            <person name="Lauber J."/>
            <person name="Lazarevic V."/>
            <person name="Lee S.-M."/>
            <person name="Levine A."/>
            <person name="Liu H."/>
            <person name="Masuda S."/>
            <person name="Mauel C."/>
            <person name="Medigue C."/>
            <person name="Medina N."/>
            <person name="Mellado R.P."/>
            <person name="Mizuno M."/>
            <person name="Moestl D."/>
            <person name="Nakai S."/>
            <person name="Noback M."/>
            <person name="Noone D."/>
            <person name="O'Reilly M."/>
            <person name="Ogawa K."/>
            <person name="Ogiwara A."/>
            <person name="Oudega B."/>
            <person name="Park S.-H."/>
            <person name="Parro V."/>
            <person name="Pohl T.M."/>
            <person name="Portetelle D."/>
            <person name="Porwollik S."/>
            <person name="Prescott A.M."/>
            <person name="Presecan E."/>
            <person name="Pujic P."/>
            <person name="Purnelle B."/>
            <person name="Rapoport G."/>
            <person name="Rey M."/>
            <person name="Reynolds S."/>
            <person name="Rieger M."/>
            <person name="Rivolta C."/>
            <person name="Rocha E."/>
            <person name="Roche B."/>
            <person name="Rose M."/>
            <person name="Sadaie Y."/>
            <person name="Sato T."/>
            <person name="Scanlan E."/>
            <person name="Schleich S."/>
            <person name="Schroeter R."/>
            <person name="Scoffone F."/>
            <person name="Sekiguchi J."/>
            <person name="Sekowska A."/>
            <person name="Seror S.J."/>
            <person name="Serror P."/>
            <person name="Shin B.-S."/>
            <person name="Soldo B."/>
            <person name="Sorokin A."/>
            <person name="Tacconi E."/>
            <person name="Takagi T."/>
            <person name="Takahashi H."/>
            <person name="Takemaru K."/>
            <person name="Takeuchi M."/>
            <person name="Tamakoshi A."/>
            <person name="Tanaka T."/>
            <person name="Terpstra P."/>
            <person name="Tognoni A."/>
            <person name="Tosato V."/>
            <person name="Uchiyama S."/>
            <person name="Vandenbol M."/>
            <person name="Vannier F."/>
            <person name="Vassarotti A."/>
            <person name="Viari A."/>
            <person name="Wambutt R."/>
            <person name="Wedler E."/>
            <person name="Wedler H."/>
            <person name="Weitzenegger T."/>
            <person name="Winters P."/>
            <person name="Wipat A."/>
            <person name="Yamamoto H."/>
            <person name="Yamane K."/>
            <person name="Yasumoto K."/>
            <person name="Yata K."/>
            <person name="Yoshida K."/>
            <person name="Yoshikawa H.-F."/>
            <person name="Zumstein E."/>
            <person name="Yoshikawa H."/>
            <person name="Danchin A."/>
        </authorList>
    </citation>
    <scope>NUCLEOTIDE SEQUENCE [LARGE SCALE GENOMIC DNA]</scope>
    <source>
        <strain>168</strain>
    </source>
</reference>
<reference key="3">
    <citation type="journal article" date="2011" name="J. Mol. Biol.">
        <title>Indirect repression by Bacillus subtilis CodY via displacement of the activator of the proline utilization operon.</title>
        <authorList>
            <person name="Belitsky B.R."/>
        </authorList>
    </citation>
    <scope>INDUCTION</scope>
</reference>
<reference key="4">
    <citation type="journal article" date="2011" name="Microbiology">
        <title>PrcR, a PucR-type transcriptional activator, is essential for proline utilization and mediates proline-responsive expression of the proline utilization operon putBCP in Bacillus subtilis.</title>
        <authorList>
            <person name="Huang S.C."/>
            <person name="Lin T.H."/>
            <person name="Shaw G.C."/>
        </authorList>
    </citation>
    <scope>INDUCTION</scope>
    <source>
        <strain>168</strain>
    </source>
</reference>
<reference key="5">
    <citation type="journal article" date="2012" name="J. Bacteriol.">
        <title>Proline utilization by Bacillus subtilis: uptake and catabolism.</title>
        <authorList>
            <person name="Moses S."/>
            <person name="Sinner T."/>
            <person name="Zaprasis A."/>
            <person name="Stoeveken N."/>
            <person name="Hoffmann T."/>
            <person name="Belitsky B.R."/>
            <person name="Sonenshein A.L."/>
            <person name="Bremer E."/>
        </authorList>
    </citation>
    <scope>FUNCTION</scope>
    <scope>BIOPHYSICOCHEMICAL PROPERTIES</scope>
    <scope>INDUCTION</scope>
    <scope>DISRUPTION PHENOTYPE</scope>
    <source>
        <strain>168 / JH642</strain>
    </source>
</reference>
<feature type="chain" id="PRO_0000360821" description="High-affinity proline transporter PutP">
    <location>
        <begin position="1"/>
        <end position="473"/>
    </location>
</feature>
<feature type="transmembrane region" description="Helical" evidence="1">
    <location>
        <begin position="32"/>
        <end position="52"/>
    </location>
</feature>
<feature type="transmembrane region" description="Helical" evidence="1">
    <location>
        <begin position="56"/>
        <end position="76"/>
    </location>
</feature>
<feature type="transmembrane region" description="Helical" evidence="1">
    <location>
        <begin position="114"/>
        <end position="134"/>
    </location>
</feature>
<feature type="transmembrane region" description="Helical" evidence="1">
    <location>
        <begin position="146"/>
        <end position="166"/>
    </location>
</feature>
<feature type="transmembrane region" description="Helical" evidence="1">
    <location>
        <begin position="171"/>
        <end position="191"/>
    </location>
</feature>
<feature type="transmembrane region" description="Helical" evidence="1">
    <location>
        <begin position="218"/>
        <end position="238"/>
    </location>
</feature>
<feature type="transmembrane region" description="Helical" evidence="1">
    <location>
        <begin position="256"/>
        <end position="276"/>
    </location>
</feature>
<feature type="transmembrane region" description="Helical" evidence="1">
    <location>
        <begin position="299"/>
        <end position="319"/>
    </location>
</feature>
<feature type="transmembrane region" description="Helical" evidence="1">
    <location>
        <begin position="350"/>
        <end position="370"/>
    </location>
</feature>
<feature type="transmembrane region" description="Helical" evidence="1">
    <location>
        <begin position="376"/>
        <end position="396"/>
    </location>
</feature>
<feature type="transmembrane region" description="Helical" evidence="1">
    <location>
        <begin position="408"/>
        <end position="428"/>
    </location>
</feature>
<feature type="transmembrane region" description="Helical" evidence="1">
    <location>
        <begin position="431"/>
        <end position="451"/>
    </location>
</feature>
<name>PUTP_BACSU</name>
<proteinExistence type="evidence at protein level"/>
<gene>
    <name evidence="5" type="primary">putP</name>
    <name type="synonym">ycgO</name>
    <name type="ordered locus">BSU03220</name>
</gene>
<keyword id="KW-1003">Cell membrane</keyword>
<keyword id="KW-0406">Ion transport</keyword>
<keyword id="KW-0472">Membrane</keyword>
<keyword id="KW-1185">Reference proteome</keyword>
<keyword id="KW-0915">Sodium</keyword>
<keyword id="KW-0739">Sodium transport</keyword>
<keyword id="KW-0769">Symport</keyword>
<keyword id="KW-0812">Transmembrane</keyword>
<keyword id="KW-1133">Transmembrane helix</keyword>
<keyword id="KW-0813">Transport</keyword>
<evidence type="ECO:0000255" key="1"/>
<evidence type="ECO:0000269" key="2">
    <source>
    </source>
</evidence>
<evidence type="ECO:0000269" key="3">
    <source>
    </source>
</evidence>
<evidence type="ECO:0000269" key="4">
    <source>
    </source>
</evidence>
<evidence type="ECO:0000303" key="5">
    <source>
    </source>
</evidence>
<evidence type="ECO:0000305" key="6"/>
<evidence type="ECO:0000305" key="7">
    <source>
    </source>
</evidence>